<proteinExistence type="inferred from homology"/>
<gene>
    <name evidence="1" type="primary">srp19</name>
    <name type="ordered locus">Cmaq_0367</name>
</gene>
<accession>A8MBC3</accession>
<organism>
    <name type="scientific">Caldivirga maquilingensis (strain ATCC 700844 / DSM 13496 / JCM 10307 / IC-167)</name>
    <dbReference type="NCBI Taxonomy" id="397948"/>
    <lineage>
        <taxon>Archaea</taxon>
        <taxon>Thermoproteota</taxon>
        <taxon>Thermoprotei</taxon>
        <taxon>Thermoproteales</taxon>
        <taxon>Thermoproteaceae</taxon>
        <taxon>Caldivirga</taxon>
    </lineage>
</organism>
<protein>
    <recommendedName>
        <fullName evidence="1">Signal recognition particle 19 kDa protein</fullName>
        <shortName evidence="1">SRP19</shortName>
    </recommendedName>
</protein>
<dbReference type="EMBL" id="CP000852">
    <property type="protein sequence ID" value="ABW01213.1"/>
    <property type="molecule type" value="Genomic_DNA"/>
</dbReference>
<dbReference type="RefSeq" id="WP_012185433.1">
    <property type="nucleotide sequence ID" value="NC_009954.1"/>
</dbReference>
<dbReference type="SMR" id="A8MBC3"/>
<dbReference type="STRING" id="397948.Cmaq_0367"/>
<dbReference type="GeneID" id="5710094"/>
<dbReference type="KEGG" id="cma:Cmaq_0367"/>
<dbReference type="eggNOG" id="arCOG01217">
    <property type="taxonomic scope" value="Archaea"/>
</dbReference>
<dbReference type="HOGENOM" id="CLU_169299_1_0_2"/>
<dbReference type="OrthoDB" id="56356at2157"/>
<dbReference type="Proteomes" id="UP000001137">
    <property type="component" value="Chromosome"/>
</dbReference>
<dbReference type="GO" id="GO:0048500">
    <property type="term" value="C:signal recognition particle"/>
    <property type="evidence" value="ECO:0007669"/>
    <property type="project" value="UniProtKB-UniRule"/>
</dbReference>
<dbReference type="GO" id="GO:0008312">
    <property type="term" value="F:7S RNA binding"/>
    <property type="evidence" value="ECO:0007669"/>
    <property type="project" value="UniProtKB-UniRule"/>
</dbReference>
<dbReference type="GO" id="GO:0006617">
    <property type="term" value="P:SRP-dependent cotranslational protein targeting to membrane, signal sequence recognition"/>
    <property type="evidence" value="ECO:0007669"/>
    <property type="project" value="TreeGrafter"/>
</dbReference>
<dbReference type="Gene3D" id="3.30.56.30">
    <property type="entry name" value="Signal recognition particle, SRP19-like subunit"/>
    <property type="match status" value="1"/>
</dbReference>
<dbReference type="HAMAP" id="MF_00305">
    <property type="entry name" value="SRP19"/>
    <property type="match status" value="1"/>
</dbReference>
<dbReference type="InterPro" id="IPR002778">
    <property type="entry name" value="Signal_recog_particle_SRP19"/>
</dbReference>
<dbReference type="InterPro" id="IPR036521">
    <property type="entry name" value="SRP19-like_sf"/>
</dbReference>
<dbReference type="InterPro" id="IPR022938">
    <property type="entry name" value="SRP19_arc-type"/>
</dbReference>
<dbReference type="PANTHER" id="PTHR17453">
    <property type="entry name" value="SIGNAL RECOGNITION PARTICLE 19 KD PROTEIN"/>
    <property type="match status" value="1"/>
</dbReference>
<dbReference type="PANTHER" id="PTHR17453:SF0">
    <property type="entry name" value="SIGNAL RECOGNITION PARTICLE 19 KDA PROTEIN"/>
    <property type="match status" value="1"/>
</dbReference>
<dbReference type="Pfam" id="PF01922">
    <property type="entry name" value="SRP19"/>
    <property type="match status" value="1"/>
</dbReference>
<dbReference type="SUPFAM" id="SSF69695">
    <property type="entry name" value="SRP19"/>
    <property type="match status" value="1"/>
</dbReference>
<sequence>MGKKDYWVVWRINIDSTVSRSNGRVVPRQLAVDKPTLEEIAKAASMLGLKYEAHPEKKHPRHWFEEDYVGCIYVYKVDDYSRRSLIKKLAQIVKSSRRGG</sequence>
<keyword id="KW-0963">Cytoplasm</keyword>
<keyword id="KW-1185">Reference proteome</keyword>
<keyword id="KW-0687">Ribonucleoprotein</keyword>
<keyword id="KW-0694">RNA-binding</keyword>
<keyword id="KW-0733">Signal recognition particle</keyword>
<comment type="function">
    <text evidence="1">Involved in targeting and insertion of nascent membrane proteins into the cytoplasmic membrane. Binds directly to 7S RNA and mediates binding of the 54 kDa subunit of the SRP.</text>
</comment>
<comment type="subunit">
    <text evidence="1">Part of the signal recognition particle protein translocation system, which is composed of SRP and FtsY. Archaeal SRP consists of a 7S RNA molecule of 300 nucleotides and two protein subunits: SRP54 and SRP19.</text>
</comment>
<comment type="subcellular location">
    <subcellularLocation>
        <location evidence="1">Cytoplasm</location>
    </subcellularLocation>
</comment>
<comment type="similarity">
    <text evidence="1">Belongs to the SRP19 family.</text>
</comment>
<feature type="chain" id="PRO_1000115616" description="Signal recognition particle 19 kDa protein">
    <location>
        <begin position="1"/>
        <end position="100"/>
    </location>
</feature>
<name>SRP19_CALMQ</name>
<reference key="1">
    <citation type="submission" date="2007-10" db="EMBL/GenBank/DDBJ databases">
        <title>Complete sequence of Caldivirga maquilingensis IC-167.</title>
        <authorList>
            <consortium name="US DOE Joint Genome Institute"/>
            <person name="Copeland A."/>
            <person name="Lucas S."/>
            <person name="Lapidus A."/>
            <person name="Barry K."/>
            <person name="Glavina del Rio T."/>
            <person name="Dalin E."/>
            <person name="Tice H."/>
            <person name="Pitluck S."/>
            <person name="Saunders E."/>
            <person name="Brettin T."/>
            <person name="Bruce D."/>
            <person name="Detter J.C."/>
            <person name="Han C."/>
            <person name="Schmutz J."/>
            <person name="Larimer F."/>
            <person name="Land M."/>
            <person name="Hauser L."/>
            <person name="Kyrpides N."/>
            <person name="Ivanova N."/>
            <person name="Biddle J.F."/>
            <person name="Zhang Z."/>
            <person name="Fitz-Gibbon S.T."/>
            <person name="Lowe T.M."/>
            <person name="Saltikov C."/>
            <person name="House C.H."/>
            <person name="Richardson P."/>
        </authorList>
    </citation>
    <scope>NUCLEOTIDE SEQUENCE [LARGE SCALE GENOMIC DNA]</scope>
    <source>
        <strain>ATCC 700844 / DSM 13496 / JCM 10307 / IC-167</strain>
    </source>
</reference>
<evidence type="ECO:0000255" key="1">
    <source>
        <dbReference type="HAMAP-Rule" id="MF_00305"/>
    </source>
</evidence>